<evidence type="ECO:0000250" key="1"/>
<evidence type="ECO:0000250" key="2">
    <source>
        <dbReference type="UniProtKB" id="P81172"/>
    </source>
</evidence>
<evidence type="ECO:0000255" key="3"/>
<evidence type="ECO:0000269" key="4">
    <source>
    </source>
</evidence>
<evidence type="ECO:0000269" key="5">
    <source>
    </source>
</evidence>
<evidence type="ECO:0000269" key="6">
    <source>
    </source>
</evidence>
<evidence type="ECO:0000269" key="7">
    <source>
    </source>
</evidence>
<evidence type="ECO:0000269" key="8">
    <source>
    </source>
</evidence>
<evidence type="ECO:0000269" key="9">
    <source>
    </source>
</evidence>
<evidence type="ECO:0000305" key="10"/>
<comment type="function">
    <text evidence="5 9">Liver-produced hormone that constitutes the main circulating regulator of iron absorption and distribution across tissues. Acts by promoting endocytosis and degradation of SLC40A1, leading to the retention of iron in iron-exporting cells and decreased flow of iron into plasma. Controls the major flows of iron into plasma: absorption of dietary iron in the intestine, recycling of iron by macrophages, which phagocytose old erythrocytes and other cells, and mobilization of stored iron from hepatocytes.</text>
</comment>
<comment type="subunit">
    <text evidence="2">Interacts with SLC40A1; this interaction promotes SLC40A1 rapid ubiquitination.</text>
</comment>
<comment type="subcellular location">
    <subcellularLocation>
        <location evidence="4 8">Secreted</location>
    </subcellularLocation>
</comment>
<comment type="tissue specificity">
    <text evidence="4 7 8">Highly expressed in the liver and to a much lesser extent in the heart. Secreted in blood (PubMed:15124018).</text>
</comment>
<comment type="induction">
    <text evidence="6 8 9">Regulated in response to changes in circulating iron concentrations, iron stores or the development of inflammation and iron-restricted erythropoiesis. Down-regulated following anemia induced by hemorrhage or hemolysis: down-regulation is mediated by ERFE (PubMed:12370282, PubMed:15124018, PubMed:24880340). The induction of upon inflammation is mediated by IL6 (PubMed:15124018).</text>
</comment>
<comment type="similarity">
    <text evidence="10">Belongs to the hepcidin family.</text>
</comment>
<keyword id="KW-0165">Cleavage on pair of basic residues</keyword>
<keyword id="KW-1015">Disulfide bond</keyword>
<keyword id="KW-0372">Hormone</keyword>
<keyword id="KW-1185">Reference proteome</keyword>
<keyword id="KW-0964">Secreted</keyword>
<keyword id="KW-0732">Signal</keyword>
<feature type="signal peptide" evidence="3">
    <location>
        <begin position="1"/>
        <end position="23"/>
    </location>
</feature>
<feature type="propeptide" id="PRO_0000013381" evidence="3">
    <location>
        <begin position="24"/>
        <end position="53"/>
    </location>
</feature>
<feature type="peptide" id="PRO_0000013382" description="Hepcidin">
    <location>
        <begin position="59"/>
        <end position="83"/>
    </location>
</feature>
<feature type="disulfide bond" evidence="1">
    <location>
        <begin position="65"/>
        <end position="81"/>
    </location>
</feature>
<feature type="disulfide bond" evidence="1">
    <location>
        <begin position="68"/>
        <end position="71"/>
    </location>
</feature>
<feature type="disulfide bond" evidence="1">
    <location>
        <begin position="69"/>
        <end position="77"/>
    </location>
</feature>
<feature type="disulfide bond" evidence="1">
    <location>
        <begin position="72"/>
        <end position="80"/>
    </location>
</feature>
<gene>
    <name type="primary">Hamp</name>
    <name type="synonym">Hamp1</name>
    <name type="synonym">Hepc</name>
    <name type="synonym">Hepc1</name>
</gene>
<organism>
    <name type="scientific">Mus musculus</name>
    <name type="common">Mouse</name>
    <dbReference type="NCBI Taxonomy" id="10090"/>
    <lineage>
        <taxon>Eukaryota</taxon>
        <taxon>Metazoa</taxon>
        <taxon>Chordata</taxon>
        <taxon>Craniata</taxon>
        <taxon>Vertebrata</taxon>
        <taxon>Euteleostomi</taxon>
        <taxon>Mammalia</taxon>
        <taxon>Eutheria</taxon>
        <taxon>Euarchontoglires</taxon>
        <taxon>Glires</taxon>
        <taxon>Rodentia</taxon>
        <taxon>Myomorpha</taxon>
        <taxon>Muroidea</taxon>
        <taxon>Muridae</taxon>
        <taxon>Murinae</taxon>
        <taxon>Mus</taxon>
        <taxon>Mus</taxon>
    </lineage>
</organism>
<accession>Q9EQ21</accession>
<proteinExistence type="evidence at transcript level"/>
<sequence>MALSTRTQAACLLLLLLASLSSTTYLHQQMRQTTELQPLHGEESRADIAIPMQKRRKRDTNFPICIFCCKCCNNSQCGICCKT</sequence>
<protein>
    <recommendedName>
        <fullName>Hepcidin</fullName>
    </recommendedName>
</protein>
<dbReference type="EMBL" id="AF297664">
    <property type="protein sequence ID" value="AAG49293.1"/>
    <property type="molecule type" value="mRNA"/>
</dbReference>
<dbReference type="EMBL" id="AF503444">
    <property type="protein sequence ID" value="AAM27440.1"/>
    <property type="molecule type" value="mRNA"/>
</dbReference>
<dbReference type="EMBL" id="BC021587">
    <property type="protein sequence ID" value="AAH21587.1"/>
    <property type="molecule type" value="mRNA"/>
</dbReference>
<dbReference type="CCDS" id="CCDS39895.1"/>
<dbReference type="RefSeq" id="NP_115930.1">
    <property type="nucleotide sequence ID" value="NM_032541.2"/>
</dbReference>
<dbReference type="SMR" id="Q9EQ21"/>
<dbReference type="FunCoup" id="Q9EQ21">
    <property type="interactions" value="123"/>
</dbReference>
<dbReference type="STRING" id="10090.ENSMUSP00000055404"/>
<dbReference type="TCDB" id="8.A.37.1.1">
    <property type="family name" value="the hepcidin (hepcidin) family"/>
</dbReference>
<dbReference type="PhosphoSitePlus" id="Q9EQ21"/>
<dbReference type="jPOST" id="Q9EQ21"/>
<dbReference type="PaxDb" id="10090-ENSMUSP00000055404"/>
<dbReference type="PeptideAtlas" id="Q9EQ21"/>
<dbReference type="ProteomicsDB" id="269735"/>
<dbReference type="Antibodypedia" id="29325">
    <property type="antibodies" value="442 antibodies from 32 providers"/>
</dbReference>
<dbReference type="DNASU" id="84506"/>
<dbReference type="Ensembl" id="ENSMUST00000062620.9">
    <property type="protein sequence ID" value="ENSMUSP00000055404.8"/>
    <property type="gene ID" value="ENSMUSG00000050440.9"/>
</dbReference>
<dbReference type="GeneID" id="84506"/>
<dbReference type="KEGG" id="mmu:84506"/>
<dbReference type="UCSC" id="uc009ghf.1">
    <property type="organism name" value="mouse"/>
</dbReference>
<dbReference type="AGR" id="MGI:1933533"/>
<dbReference type="CTD" id="57817"/>
<dbReference type="MGI" id="MGI:1933533">
    <property type="gene designation" value="Hamp"/>
</dbReference>
<dbReference type="VEuPathDB" id="HostDB:ENSMUSG00000050440"/>
<dbReference type="eggNOG" id="ENOG502T0FU">
    <property type="taxonomic scope" value="Eukaryota"/>
</dbReference>
<dbReference type="GeneTree" id="ENSGT00390000003154"/>
<dbReference type="HOGENOM" id="CLU_2557737_0_0_1"/>
<dbReference type="InParanoid" id="Q9EQ21"/>
<dbReference type="OMA" id="PICLFCC"/>
<dbReference type="OrthoDB" id="9428792at2759"/>
<dbReference type="PhylomeDB" id="Q9EQ21"/>
<dbReference type="TreeFam" id="TF330932"/>
<dbReference type="BioGRID-ORCS" id="84506">
    <property type="hits" value="0 hits in 78 CRISPR screens"/>
</dbReference>
<dbReference type="ChiTaRS" id="Hamp">
    <property type="organism name" value="mouse"/>
</dbReference>
<dbReference type="PRO" id="PR:Q9EQ21"/>
<dbReference type="Proteomes" id="UP000000589">
    <property type="component" value="Chromosome 7"/>
</dbReference>
<dbReference type="RNAct" id="Q9EQ21">
    <property type="molecule type" value="protein"/>
</dbReference>
<dbReference type="Bgee" id="ENSMUSG00000050440">
    <property type="expression patterns" value="Expressed in left lobe of liver and 88 other cell types or tissues"/>
</dbReference>
<dbReference type="GO" id="GO:0005576">
    <property type="term" value="C:extracellular region"/>
    <property type="evidence" value="ECO:0000314"/>
    <property type="project" value="UniProtKB"/>
</dbReference>
<dbReference type="GO" id="GO:0005615">
    <property type="term" value="C:extracellular space"/>
    <property type="evidence" value="ECO:0000314"/>
    <property type="project" value="MGI"/>
</dbReference>
<dbReference type="GO" id="GO:0005634">
    <property type="term" value="C:nucleus"/>
    <property type="evidence" value="ECO:0000314"/>
    <property type="project" value="MGI"/>
</dbReference>
<dbReference type="GO" id="GO:0005507">
    <property type="term" value="F:copper ion binding"/>
    <property type="evidence" value="ECO:0000314"/>
    <property type="project" value="MGI"/>
</dbReference>
<dbReference type="GO" id="GO:0005179">
    <property type="term" value="F:hormone activity"/>
    <property type="evidence" value="ECO:0007669"/>
    <property type="project" value="UniProtKB-KW"/>
</dbReference>
<dbReference type="GO" id="GO:0007259">
    <property type="term" value="P:cell surface receptor signaling pathway via JAK-STAT"/>
    <property type="evidence" value="ECO:0000314"/>
    <property type="project" value="MGI"/>
</dbReference>
<dbReference type="GO" id="GO:0042742">
    <property type="term" value="P:defense response to bacterium"/>
    <property type="evidence" value="ECO:0000314"/>
    <property type="project" value="MGI"/>
</dbReference>
<dbReference type="GO" id="GO:0050832">
    <property type="term" value="P:defense response to fungus"/>
    <property type="evidence" value="ECO:0000314"/>
    <property type="project" value="MGI"/>
</dbReference>
<dbReference type="GO" id="GO:0051649">
    <property type="term" value="P:establishment of localization in cell"/>
    <property type="evidence" value="ECO:0000316"/>
    <property type="project" value="MGI"/>
</dbReference>
<dbReference type="GO" id="GO:0006954">
    <property type="term" value="P:inflammatory response"/>
    <property type="evidence" value="ECO:0000316"/>
    <property type="project" value="MGI"/>
</dbReference>
<dbReference type="GO" id="GO:0006879">
    <property type="term" value="P:intracellular iron ion homeostasis"/>
    <property type="evidence" value="ECO:0000314"/>
    <property type="project" value="UniProtKB"/>
</dbReference>
<dbReference type="GO" id="GO:0034755">
    <property type="term" value="P:iron ion transmembrane transport"/>
    <property type="evidence" value="ECO:0000316"/>
    <property type="project" value="MGI"/>
</dbReference>
<dbReference type="GO" id="GO:0042116">
    <property type="term" value="P:macrophage activation"/>
    <property type="evidence" value="ECO:0000315"/>
    <property type="project" value="MGI"/>
</dbReference>
<dbReference type="GO" id="GO:0060586">
    <property type="term" value="P:multicellular organismal-level iron ion homeostasis"/>
    <property type="evidence" value="ECO:0000314"/>
    <property type="project" value="MGI"/>
</dbReference>
<dbReference type="GO" id="GO:0002262">
    <property type="term" value="P:myeloid cell homeostasis"/>
    <property type="evidence" value="ECO:0000315"/>
    <property type="project" value="MGI"/>
</dbReference>
<dbReference type="GO" id="GO:0045779">
    <property type="term" value="P:negative regulation of bone resorption"/>
    <property type="evidence" value="ECO:0000315"/>
    <property type="project" value="MGI"/>
</dbReference>
<dbReference type="GO" id="GO:0050728">
    <property type="term" value="P:negative regulation of inflammatory response"/>
    <property type="evidence" value="ECO:0000316"/>
    <property type="project" value="MGI"/>
</dbReference>
<dbReference type="GO" id="GO:0034760">
    <property type="term" value="P:negative regulation of iron ion transmembrane transport"/>
    <property type="evidence" value="ECO:0000316"/>
    <property type="project" value="MGI"/>
</dbReference>
<dbReference type="GO" id="GO:0000122">
    <property type="term" value="P:negative regulation of transcription by RNA polymerase II"/>
    <property type="evidence" value="ECO:0000315"/>
    <property type="project" value="BHF-UCL"/>
</dbReference>
<dbReference type="GO" id="GO:0043032">
    <property type="term" value="P:positive regulation of macrophage activation"/>
    <property type="evidence" value="ECO:0000315"/>
    <property type="project" value="MGI"/>
</dbReference>
<dbReference type="GO" id="GO:0045732">
    <property type="term" value="P:positive regulation of protein catabolic process"/>
    <property type="evidence" value="ECO:0000314"/>
    <property type="project" value="MGI"/>
</dbReference>
<dbReference type="GO" id="GO:0045944">
    <property type="term" value="P:positive regulation of transcription by RNA polymerase II"/>
    <property type="evidence" value="ECO:0000316"/>
    <property type="project" value="MGI"/>
</dbReference>
<dbReference type="GO" id="GO:0030163">
    <property type="term" value="P:protein catabolic process"/>
    <property type="evidence" value="ECO:0000314"/>
    <property type="project" value="MGI"/>
</dbReference>
<dbReference type="GO" id="GO:0006366">
    <property type="term" value="P:transcription by RNA polymerase II"/>
    <property type="evidence" value="ECO:0000316"/>
    <property type="project" value="MGI"/>
</dbReference>
<dbReference type="InterPro" id="IPR010500">
    <property type="entry name" value="Hepcidin"/>
</dbReference>
<dbReference type="PANTHER" id="PTHR16877">
    <property type="entry name" value="HEPCIDIN"/>
    <property type="match status" value="1"/>
</dbReference>
<dbReference type="PANTHER" id="PTHR16877:SF0">
    <property type="entry name" value="HEPCIDIN"/>
    <property type="match status" value="1"/>
</dbReference>
<dbReference type="Pfam" id="PF06446">
    <property type="entry name" value="Hepcidin"/>
    <property type="match status" value="1"/>
</dbReference>
<name>HEPC_MOUSE</name>
<reference key="1">
    <citation type="journal article" date="2001" name="J. Biol. Chem.">
        <title>A new mouse liver-specific gene, encoding a protein homologous to human antimicrobial peptide hepcidin, is overexpressed during iron overload.</title>
        <authorList>
            <person name="Pigeon C."/>
            <person name="Ilyin G."/>
            <person name="Courselaud B."/>
            <person name="Leroyer P."/>
            <person name="Turlin B."/>
            <person name="Brissot P."/>
            <person name="Loreal O."/>
        </authorList>
    </citation>
    <scope>NUCLEOTIDE SEQUENCE [MRNA]</scope>
    <scope>TISSUE SPECIFICITY</scope>
    <scope>SUBCELLULAR LOCATION</scope>
</reference>
<reference key="2">
    <citation type="journal article" date="2001" name="Proc. Natl. Acad. Sci. U.S.A.">
        <title>Lack of hepcidin gene expression and severe tissue iron overload in upstream stimulatory factor 2 (USF2) knockout mice.</title>
        <authorList>
            <person name="Nicolas G."/>
            <person name="Bennoun M."/>
            <person name="Devaux I."/>
            <person name="Beaumont C."/>
            <person name="Grandchamp B."/>
            <person name="Kahn A."/>
            <person name="Vaulont S."/>
        </authorList>
    </citation>
    <scope>NUCLEOTIDE SEQUENCE [MRNA]</scope>
    <scope>FUNCTION</scope>
    <source>
        <strain>C57BL/6 X 129/Sv</strain>
    </source>
</reference>
<reference key="3">
    <citation type="journal article" date="2004" name="Genome Res.">
        <title>The status, quality, and expansion of the NIH full-length cDNA project: the Mammalian Gene Collection (MGC).</title>
        <authorList>
            <consortium name="The MGC Project Team"/>
        </authorList>
    </citation>
    <scope>NUCLEOTIDE SEQUENCE [LARGE SCALE MRNA]</scope>
    <source>
        <tissue>Liver</tissue>
    </source>
</reference>
<reference key="4">
    <citation type="journal article" date="2002" name="J. Clin. Invest.">
        <title>The gene encoding the iron regulatory peptide hepcidin is regulated by anemia, hypoxia, and inflammation.</title>
        <authorList>
            <person name="Nicolas G."/>
            <person name="Chauvet C."/>
            <person name="Viatte L."/>
            <person name="Danan J.L."/>
            <person name="Bigard X."/>
            <person name="Devaux I."/>
            <person name="Beaumont C."/>
            <person name="Kahn A."/>
            <person name="Vaulont S."/>
        </authorList>
    </citation>
    <scope>INDUCTION</scope>
</reference>
<reference key="5">
    <citation type="journal article" date="2003" name="FEBS Lett.">
        <title>Comparative analysis of mouse hepcidin 1 and 2 genes: evidence for different patterns of expression and co-inducibility during iron overload.</title>
        <authorList>
            <person name="Ilyin G."/>
            <person name="Courselaud B."/>
            <person name="Troadec M.-B."/>
            <person name="Pigeon C."/>
            <person name="Alizadeh M."/>
            <person name="Leroyer P."/>
            <person name="Brissot P."/>
            <person name="Loreal O."/>
        </authorList>
    </citation>
    <scope>TISSUE SPECIFICITY</scope>
</reference>
<reference key="6">
    <citation type="journal article" date="2004" name="J. Clin. Invest.">
        <title>IL-6 mediates hypoferremia of inflammation by inducing the synthesis of the iron regulatory hormone hepcidin.</title>
        <authorList>
            <person name="Nemeth E."/>
            <person name="Rivera S."/>
            <person name="Gabayan V."/>
            <person name="Keller C."/>
            <person name="Taudorf S."/>
            <person name="Pedersen B.K."/>
            <person name="Ganz T."/>
        </authorList>
    </citation>
    <scope>INDUCTION BY INFLAMMATION</scope>
    <scope>SUBCELLULAR LOCATION</scope>
    <scope>TISSUE SPECIFICITY</scope>
</reference>
<reference key="7">
    <citation type="journal article" date="2014" name="Nat. Genet.">
        <title>Identification of erythroferrone as an erythroid regulator of iron metabolism.</title>
        <authorList>
            <person name="Kautz L."/>
            <person name="Jung G."/>
            <person name="Valore E.V."/>
            <person name="Rivella S."/>
            <person name="Nemeth E."/>
            <person name="Ganz T."/>
        </authorList>
    </citation>
    <scope>FUNCTION</scope>
    <scope>INDUCTION</scope>
</reference>